<evidence type="ECO:0000255" key="1">
    <source>
        <dbReference type="HAMAP-Rule" id="MF_00749"/>
    </source>
</evidence>
<evidence type="ECO:0000256" key="2">
    <source>
        <dbReference type="SAM" id="MobiDB-lite"/>
    </source>
</evidence>
<feature type="chain" id="PRO_0000303107" description="RNA chaperone ProQ">
    <location>
        <begin position="1"/>
        <end position="237"/>
    </location>
</feature>
<feature type="region of interest" description="Disordered" evidence="2">
    <location>
        <begin position="106"/>
        <end position="188"/>
    </location>
</feature>
<feature type="compositionally biased region" description="Basic and acidic residues" evidence="2">
    <location>
        <begin position="146"/>
        <end position="158"/>
    </location>
</feature>
<reference key="1">
    <citation type="journal article" date="2004" name="Proc. Natl. Acad. Sci. U.S.A.">
        <title>Insights into the evolution of Yersinia pestis through whole-genome comparison with Yersinia pseudotuberculosis.</title>
        <authorList>
            <person name="Chain P.S.G."/>
            <person name="Carniel E."/>
            <person name="Larimer F.W."/>
            <person name="Lamerdin J."/>
            <person name="Stoutland P.O."/>
            <person name="Regala W.M."/>
            <person name="Georgescu A.M."/>
            <person name="Vergez L.M."/>
            <person name="Land M.L."/>
            <person name="Motin V.L."/>
            <person name="Brubaker R.R."/>
            <person name="Fowler J."/>
            <person name="Hinnebusch J."/>
            <person name="Marceau M."/>
            <person name="Medigue C."/>
            <person name="Simonet M."/>
            <person name="Chenal-Francisque V."/>
            <person name="Souza B."/>
            <person name="Dacheux D."/>
            <person name="Elliott J.M."/>
            <person name="Derbise A."/>
            <person name="Hauser L.J."/>
            <person name="Garcia E."/>
        </authorList>
    </citation>
    <scope>NUCLEOTIDE SEQUENCE [LARGE SCALE GENOMIC DNA]</scope>
    <source>
        <strain>IP32953</strain>
    </source>
</reference>
<keyword id="KW-0143">Chaperone</keyword>
<keyword id="KW-0963">Cytoplasm</keyword>
<keyword id="KW-0694">RNA-binding</keyword>
<dbReference type="EMBL" id="BX936398">
    <property type="protein sequence ID" value="CAH21615.1"/>
    <property type="molecule type" value="Genomic_DNA"/>
</dbReference>
<dbReference type="RefSeq" id="WP_002210849.1">
    <property type="nucleotide sequence ID" value="NZ_CP009712.1"/>
</dbReference>
<dbReference type="SMR" id="Q669V5"/>
<dbReference type="GeneID" id="96665860"/>
<dbReference type="KEGG" id="ypo:BZ17_78"/>
<dbReference type="KEGG" id="yps:YPTB2377"/>
<dbReference type="PATRIC" id="fig|273123.14.peg.83"/>
<dbReference type="Proteomes" id="UP000001011">
    <property type="component" value="Chromosome"/>
</dbReference>
<dbReference type="GO" id="GO:0005829">
    <property type="term" value="C:cytosol"/>
    <property type="evidence" value="ECO:0007669"/>
    <property type="project" value="TreeGrafter"/>
</dbReference>
<dbReference type="GO" id="GO:0033592">
    <property type="term" value="F:RNA strand annealing activity"/>
    <property type="evidence" value="ECO:0007669"/>
    <property type="project" value="UniProtKB-UniRule"/>
</dbReference>
<dbReference type="GO" id="GO:0034057">
    <property type="term" value="F:RNA strand-exchange activity"/>
    <property type="evidence" value="ECO:0007669"/>
    <property type="project" value="UniProtKB-UniRule"/>
</dbReference>
<dbReference type="GO" id="GO:0010608">
    <property type="term" value="P:post-transcriptional regulation of gene expression"/>
    <property type="evidence" value="ECO:0007669"/>
    <property type="project" value="InterPro"/>
</dbReference>
<dbReference type="FunFam" id="1.10.1710.10:FF:000001">
    <property type="entry name" value="RNA chaperone ProQ"/>
    <property type="match status" value="1"/>
</dbReference>
<dbReference type="Gene3D" id="1.10.1710.10">
    <property type="entry name" value="ProQ/FinO domain"/>
    <property type="match status" value="1"/>
</dbReference>
<dbReference type="HAMAP" id="MF_00749">
    <property type="entry name" value="ProQ"/>
    <property type="match status" value="1"/>
</dbReference>
<dbReference type="InterPro" id="IPR023529">
    <property type="entry name" value="ProQ"/>
</dbReference>
<dbReference type="InterPro" id="IPR016103">
    <property type="entry name" value="ProQ/FinO"/>
</dbReference>
<dbReference type="InterPro" id="IPR036442">
    <property type="entry name" value="ProQ/FinO_sf"/>
</dbReference>
<dbReference type="InterPro" id="IPR035236">
    <property type="entry name" value="ProQ_C"/>
</dbReference>
<dbReference type="NCBIfam" id="NF003434">
    <property type="entry name" value="PRK04950.1"/>
    <property type="match status" value="1"/>
</dbReference>
<dbReference type="PANTHER" id="PTHR38106">
    <property type="entry name" value="RNA CHAPERONE PROQ"/>
    <property type="match status" value="1"/>
</dbReference>
<dbReference type="PANTHER" id="PTHR38106:SF1">
    <property type="entry name" value="RNA CHAPERONE PROQ"/>
    <property type="match status" value="1"/>
</dbReference>
<dbReference type="Pfam" id="PF04352">
    <property type="entry name" value="ProQ"/>
    <property type="match status" value="1"/>
</dbReference>
<dbReference type="Pfam" id="PF17516">
    <property type="entry name" value="ProQ_C"/>
    <property type="match status" value="1"/>
</dbReference>
<dbReference type="SMART" id="SM00945">
    <property type="entry name" value="ProQ"/>
    <property type="match status" value="1"/>
</dbReference>
<dbReference type="SUPFAM" id="SSF48657">
    <property type="entry name" value="FinO-like"/>
    <property type="match status" value="1"/>
</dbReference>
<sequence length="237" mass="26498">MENQPKLNSSKEVIAFLAERFPLCFTAEGEARPLKIGIFQDLVERVQGEENLSKTQLRSALRLYTSSWRYLYGVKVGAERVDLDGNPCGVLEEQHVEHARKQLEEAKARVQAQRAEQQAKKREAAIAAGETPEPRRPRPAGKKPAPRREAGAAPENRKPRQSPRPQQVRPPRPQVEENQPRPVPVTDISKLQIGQEIKVRAGKSAMDATVLEIAKDGVRVQLSSGLAMIVRAEHLQF</sequence>
<accession>Q669V5</accession>
<organism>
    <name type="scientific">Yersinia pseudotuberculosis serotype I (strain IP32953)</name>
    <dbReference type="NCBI Taxonomy" id="273123"/>
    <lineage>
        <taxon>Bacteria</taxon>
        <taxon>Pseudomonadati</taxon>
        <taxon>Pseudomonadota</taxon>
        <taxon>Gammaproteobacteria</taxon>
        <taxon>Enterobacterales</taxon>
        <taxon>Yersiniaceae</taxon>
        <taxon>Yersinia</taxon>
    </lineage>
</organism>
<comment type="function">
    <text evidence="1">RNA chaperone with significant RNA binding, RNA strand exchange and RNA duplexing activities. May regulate ProP activity through an RNA-based, post-transcriptional mechanism.</text>
</comment>
<comment type="subcellular location">
    <subcellularLocation>
        <location evidence="1">Cytoplasm</location>
    </subcellularLocation>
</comment>
<comment type="similarity">
    <text evidence="1">Belongs to the ProQ family.</text>
</comment>
<proteinExistence type="inferred from homology"/>
<name>PROQ_YERPS</name>
<protein>
    <recommendedName>
        <fullName evidence="1">RNA chaperone ProQ</fullName>
    </recommendedName>
</protein>
<gene>
    <name evidence="1" type="primary">proQ</name>
    <name type="ordered locus">YPTB2377</name>
</gene>